<keyword id="KW-0749">Sporulation</keyword>
<name>TLP_BACAA</name>
<accession>C3P449</accession>
<feature type="chain" id="PRO_1000185030" description="Small, acid-soluble spore protein Tlp">
    <location>
        <begin position="1"/>
        <end position="65"/>
    </location>
</feature>
<dbReference type="EMBL" id="CP001598">
    <property type="protein sequence ID" value="ACQ46194.1"/>
    <property type="molecule type" value="Genomic_DNA"/>
</dbReference>
<dbReference type="RefSeq" id="WP_001133509.1">
    <property type="nucleotide sequence ID" value="NC_012659.1"/>
</dbReference>
<dbReference type="SMR" id="C3P449"/>
<dbReference type="GeneID" id="93007575"/>
<dbReference type="KEGG" id="bai:BAA_3697"/>
<dbReference type="HOGENOM" id="CLU_178266_1_0_9"/>
<dbReference type="GO" id="GO:0030436">
    <property type="term" value="P:asexual sporulation"/>
    <property type="evidence" value="ECO:0007669"/>
    <property type="project" value="UniProtKB-UniRule"/>
</dbReference>
<dbReference type="GO" id="GO:0030435">
    <property type="term" value="P:sporulation resulting in formation of a cellular spore"/>
    <property type="evidence" value="ECO:0007669"/>
    <property type="project" value="UniProtKB-KW"/>
</dbReference>
<dbReference type="HAMAP" id="MF_01506">
    <property type="entry name" value="Tlp"/>
    <property type="match status" value="1"/>
</dbReference>
<dbReference type="InterPro" id="IPR017524">
    <property type="entry name" value="SASP_thioredoxin-like"/>
</dbReference>
<dbReference type="NCBIfam" id="TIGR03090">
    <property type="entry name" value="SASP_tlp"/>
    <property type="match status" value="1"/>
</dbReference>
<dbReference type="Pfam" id="PF19824">
    <property type="entry name" value="Tlp"/>
    <property type="match status" value="1"/>
</dbReference>
<sequence>MPNPDNRSDNAEKLQEMVQNTIDNFNEAKETAELSNEKDRSAIEAKNQRRLESIDSLKSEIKDES</sequence>
<protein>
    <recommendedName>
        <fullName evidence="1">Small, acid-soluble spore protein Tlp</fullName>
    </recommendedName>
</protein>
<organism>
    <name type="scientific">Bacillus anthracis (strain A0248)</name>
    <dbReference type="NCBI Taxonomy" id="592021"/>
    <lineage>
        <taxon>Bacteria</taxon>
        <taxon>Bacillati</taxon>
        <taxon>Bacillota</taxon>
        <taxon>Bacilli</taxon>
        <taxon>Bacillales</taxon>
        <taxon>Bacillaceae</taxon>
        <taxon>Bacillus</taxon>
        <taxon>Bacillus cereus group</taxon>
    </lineage>
</organism>
<reference key="1">
    <citation type="submission" date="2009-04" db="EMBL/GenBank/DDBJ databases">
        <title>Genome sequence of Bacillus anthracis A0248.</title>
        <authorList>
            <person name="Dodson R.J."/>
            <person name="Munk A.C."/>
            <person name="Bruce D."/>
            <person name="Detter C."/>
            <person name="Tapia R."/>
            <person name="Sutton G."/>
            <person name="Sims D."/>
            <person name="Brettin T."/>
        </authorList>
    </citation>
    <scope>NUCLEOTIDE SEQUENCE [LARGE SCALE GENOMIC DNA]</scope>
    <source>
        <strain>A0248</strain>
    </source>
</reference>
<gene>
    <name evidence="1" type="primary">tlp</name>
    <name type="ordered locus">BAA_3697</name>
</gene>
<evidence type="ECO:0000255" key="1">
    <source>
        <dbReference type="HAMAP-Rule" id="MF_01506"/>
    </source>
</evidence>
<comment type="subcellular location">
    <subcellularLocation>
        <location evidence="1">Spore core</location>
    </subcellularLocation>
</comment>
<comment type="induction">
    <text evidence="1">Expressed only in the forespore compartment of sporulating cells.</text>
</comment>
<comment type="similarity">
    <text evidence="1">Belongs to the Tlp family.</text>
</comment>
<proteinExistence type="inferred from homology"/>